<accession>Q25BG1</accession>
<keyword id="KW-1043">Host membrane</keyword>
<keyword id="KW-0472">Membrane</keyword>
<keyword id="KW-1185">Reference proteome</keyword>
<keyword id="KW-0812">Transmembrane</keyword>
<keyword id="KW-1133">Transmembrane helix</keyword>
<sequence>MNRSHQLLSVLAIIFYGVMVVGSMMQFLAYYELTSLPSVRQVSLMLVGICAVVCFYASIVYFVEISSRG</sequence>
<comment type="subcellular location">
    <subcellularLocation>
        <location evidence="2">Host membrane</location>
        <topology evidence="2">Multi-pass membrane protein</topology>
    </subcellularLocation>
</comment>
<protein>
    <recommendedName>
        <fullName>Putative transmembrane protein ORF34</fullName>
    </recommendedName>
</protein>
<dbReference type="EMBL" id="AF191796">
    <property type="protein sequence ID" value="AAQ13761.1"/>
    <property type="molecule type" value="Genomic_DNA"/>
</dbReference>
<dbReference type="RefSeq" id="YP_529546.1">
    <property type="nucleotide sequence ID" value="NC_007914.1"/>
</dbReference>
<dbReference type="SMR" id="Q25BG1"/>
<dbReference type="KEGG" id="vg:5142390"/>
<dbReference type="Proteomes" id="UP000007024">
    <property type="component" value="Segment"/>
</dbReference>
<dbReference type="GO" id="GO:0033644">
    <property type="term" value="C:host cell membrane"/>
    <property type="evidence" value="ECO:0007669"/>
    <property type="project" value="UniProtKB-SubCell"/>
</dbReference>
<dbReference type="GO" id="GO:0016020">
    <property type="term" value="C:membrane"/>
    <property type="evidence" value="ECO:0007669"/>
    <property type="project" value="UniProtKB-KW"/>
</dbReference>
<proteinExistence type="predicted"/>
<evidence type="ECO:0000255" key="1"/>
<evidence type="ECO:0000305" key="2"/>
<organismHost>
    <name type="scientific">Haloarcula hispanica</name>
    <dbReference type="NCBI Taxonomy" id="51589"/>
</organismHost>
<organism>
    <name type="scientific">His1 virus (isolate Australia/Victoria)</name>
    <name type="common">His1V</name>
    <name type="synonym">Haloarcula hispanica virus 1</name>
    <dbReference type="NCBI Taxonomy" id="654912"/>
    <lineage>
        <taxon>Viruses</taxon>
        <taxon>Viruses incertae sedis</taxon>
        <taxon>Halspiviridae</taxon>
        <taxon>Salterprovirus</taxon>
        <taxon>Salterprovirus His1</taxon>
    </lineage>
</organism>
<feature type="chain" id="PRO_0000384901" description="Putative transmembrane protein ORF34">
    <location>
        <begin position="1"/>
        <end position="69"/>
    </location>
</feature>
<feature type="transmembrane region" description="Helical" evidence="1">
    <location>
        <begin position="7"/>
        <end position="27"/>
    </location>
</feature>
<feature type="transmembrane region" description="Helical" evidence="1">
    <location>
        <begin position="42"/>
        <end position="62"/>
    </location>
</feature>
<reference key="1">
    <citation type="journal article" date="2006" name="Virology">
        <title>His1 and His2 are distantly related, spindle-shaped haloviruses belonging to the novel virus group, Salterprovirus.</title>
        <authorList>
            <person name="Bath C."/>
            <person name="Cukalac T."/>
            <person name="Porter K."/>
            <person name="Dyall-Smith M.L."/>
        </authorList>
    </citation>
    <scope>NUCLEOTIDE SEQUENCE [GENOMIC DNA]</scope>
</reference>
<gene>
    <name type="ORF">ORF34</name>
</gene>
<name>Y034_HIS1I</name>